<accession>B4SXW2</accession>
<protein>
    <recommendedName>
        <fullName evidence="1">Putative multidrug resistance protein MdtD</fullName>
    </recommendedName>
</protein>
<name>MDTD_SALNS</name>
<comment type="subcellular location">
    <subcellularLocation>
        <location evidence="1">Cell inner membrane</location>
        <topology evidence="1">Multi-pass membrane protein</topology>
    </subcellularLocation>
</comment>
<comment type="similarity">
    <text evidence="1">Belongs to the major facilitator superfamily. TCR/Tet family.</text>
</comment>
<reference key="1">
    <citation type="journal article" date="2011" name="J. Bacteriol.">
        <title>Comparative genomics of 28 Salmonella enterica isolates: evidence for CRISPR-mediated adaptive sublineage evolution.</title>
        <authorList>
            <person name="Fricke W.F."/>
            <person name="Mammel M.K."/>
            <person name="McDermott P.F."/>
            <person name="Tartera C."/>
            <person name="White D.G."/>
            <person name="Leclerc J.E."/>
            <person name="Ravel J."/>
            <person name="Cebula T.A."/>
        </authorList>
    </citation>
    <scope>NUCLEOTIDE SEQUENCE [LARGE SCALE GENOMIC DNA]</scope>
    <source>
        <strain>SL254</strain>
    </source>
</reference>
<sequence>MTELPDNTRWQLWIVAFGFFMQSLDTTIVNTALPSMAKSLGESPLHMHMVVVSYVLTVAVMLPASGWLADKIGVRNIFFAAIVLFTLGSLFCALSGTLNQLVLARVLQGVGGAMMVPVGRLTVMKIVPRAQYMAAMTFVTLPGQIGPLLGPALGGVLVEYASWHWIFLINIPVGIVGAMATFMLMPNYTIETRRFDLPGFLLLAIGMAVLTLALDGSKSMGISPWTLAGLAAGGAAAILLYLFHAKKNSGALFSLRLFRTPTFSLGLLGSFAGRIGSGMLPFMTPVFLQIGLGFSPFHAGLMMIPMVLGSMGMKRIVVQIVNRFGYRRVLVATTLGLALVSLLFMSVALLGWYYLLPLVLLLQGMVNSARFSSMNTLTLKDLPDTLASSGNSLLSMIMQLSMSIGVTIAGMLLGMFGQQHIGIDSSATHHVFMYTWLCMAVIIALPAIIFARVPNDTQQNMVISRRKRSL</sequence>
<feature type="chain" id="PRO_0000365287" description="Putative multidrug resistance protein MdtD">
    <location>
        <begin position="1"/>
        <end position="470"/>
    </location>
</feature>
<feature type="topological domain" description="Periplasmic" evidence="1">
    <location>
        <begin position="1"/>
        <end position="11"/>
    </location>
</feature>
<feature type="transmembrane region" description="Helical" evidence="1">
    <location>
        <begin position="12"/>
        <end position="32"/>
    </location>
</feature>
<feature type="topological domain" description="Cytoplasmic" evidence="1">
    <location>
        <begin position="33"/>
        <end position="48"/>
    </location>
</feature>
<feature type="transmembrane region" description="Helical" evidence="1">
    <location>
        <begin position="49"/>
        <end position="69"/>
    </location>
</feature>
<feature type="topological domain" description="Periplasmic" evidence="1">
    <location>
        <begin position="70"/>
        <end position="76"/>
    </location>
</feature>
<feature type="transmembrane region" description="Helical" evidence="1">
    <location>
        <begin position="77"/>
        <end position="97"/>
    </location>
</feature>
<feature type="topological domain" description="Cytoplasmic" evidence="1">
    <location>
        <begin position="98"/>
        <end position="101"/>
    </location>
</feature>
<feature type="transmembrane region" description="Helical" evidence="1">
    <location>
        <begin position="102"/>
        <end position="124"/>
    </location>
</feature>
<feature type="topological domain" description="Periplasmic" evidence="1">
    <location>
        <begin position="125"/>
        <end position="137"/>
    </location>
</feature>
<feature type="transmembrane region" description="Helical" evidence="1">
    <location>
        <begin position="138"/>
        <end position="158"/>
    </location>
</feature>
<feature type="topological domain" description="Cytoplasmic" evidence="1">
    <location>
        <begin position="159"/>
        <end position="164"/>
    </location>
</feature>
<feature type="transmembrane region" description="Helical" evidence="1">
    <location>
        <begin position="165"/>
        <end position="185"/>
    </location>
</feature>
<feature type="topological domain" description="Periplasmic" evidence="1">
    <location>
        <begin position="186"/>
        <end position="196"/>
    </location>
</feature>
<feature type="transmembrane region" description="Helical" evidence="1">
    <location>
        <begin position="197"/>
        <end position="217"/>
    </location>
</feature>
<feature type="topological domain" description="Cytoplasmic" evidence="1">
    <location>
        <begin position="218"/>
        <end position="224"/>
    </location>
</feature>
<feature type="transmembrane region" description="Helical" evidence="1">
    <location>
        <begin position="225"/>
        <end position="245"/>
    </location>
</feature>
<feature type="topological domain" description="Periplasmic" evidence="1">
    <location>
        <begin position="246"/>
        <end position="262"/>
    </location>
</feature>
<feature type="transmembrane region" description="Helical" evidence="1">
    <location>
        <begin position="263"/>
        <end position="283"/>
    </location>
</feature>
<feature type="topological domain" description="Cytoplasmic" evidence="1">
    <location>
        <begin position="284"/>
        <end position="285"/>
    </location>
</feature>
<feature type="transmembrane region" description="Helical" evidence="1">
    <location>
        <begin position="286"/>
        <end position="306"/>
    </location>
</feature>
<feature type="topological domain" description="Periplasmic" evidence="1">
    <location>
        <begin position="307"/>
        <end position="341"/>
    </location>
</feature>
<feature type="transmembrane region" description="Helical" evidence="1">
    <location>
        <begin position="342"/>
        <end position="362"/>
    </location>
</feature>
<feature type="topological domain" description="Cytoplasmic" evidence="1">
    <location>
        <begin position="363"/>
        <end position="395"/>
    </location>
</feature>
<feature type="transmembrane region" description="Helical" evidence="1">
    <location>
        <begin position="396"/>
        <end position="416"/>
    </location>
</feature>
<feature type="topological domain" description="Periplasmic" evidence="1">
    <location>
        <begin position="417"/>
        <end position="430"/>
    </location>
</feature>
<feature type="transmembrane region" description="Helical" evidence="1">
    <location>
        <begin position="431"/>
        <end position="451"/>
    </location>
</feature>
<feature type="topological domain" description="Cytoplasmic" evidence="1">
    <location>
        <begin position="452"/>
        <end position="470"/>
    </location>
</feature>
<dbReference type="EMBL" id="CP001113">
    <property type="protein sequence ID" value="ACF62011.1"/>
    <property type="molecule type" value="Genomic_DNA"/>
</dbReference>
<dbReference type="RefSeq" id="WP_000137818.1">
    <property type="nucleotide sequence ID" value="NZ_CCMR01000002.1"/>
</dbReference>
<dbReference type="SMR" id="B4SXW2"/>
<dbReference type="KEGG" id="see:SNSL254_A2315"/>
<dbReference type="HOGENOM" id="CLU_000960_28_0_6"/>
<dbReference type="Proteomes" id="UP000008824">
    <property type="component" value="Chromosome"/>
</dbReference>
<dbReference type="GO" id="GO:0005886">
    <property type="term" value="C:plasma membrane"/>
    <property type="evidence" value="ECO:0007669"/>
    <property type="project" value="UniProtKB-SubCell"/>
</dbReference>
<dbReference type="GO" id="GO:0022857">
    <property type="term" value="F:transmembrane transporter activity"/>
    <property type="evidence" value="ECO:0007669"/>
    <property type="project" value="UniProtKB-UniRule"/>
</dbReference>
<dbReference type="CDD" id="cd17503">
    <property type="entry name" value="MFS_LmrB_MDR_like"/>
    <property type="match status" value="1"/>
</dbReference>
<dbReference type="FunFam" id="1.20.1250.20:FF:000021">
    <property type="entry name" value="Putative multidrug resistance protein MdtD"/>
    <property type="match status" value="1"/>
</dbReference>
<dbReference type="FunFam" id="1.20.1720.10:FF:000001">
    <property type="entry name" value="Putative multidrug resistance protein MdtD"/>
    <property type="match status" value="1"/>
</dbReference>
<dbReference type="Gene3D" id="1.20.1250.20">
    <property type="entry name" value="MFS general substrate transporter like domains"/>
    <property type="match status" value="1"/>
</dbReference>
<dbReference type="Gene3D" id="1.20.1720.10">
    <property type="entry name" value="Multidrug resistance protein D"/>
    <property type="match status" value="1"/>
</dbReference>
<dbReference type="HAMAP" id="MF_01577">
    <property type="entry name" value="MFS_MdtD"/>
    <property type="match status" value="1"/>
</dbReference>
<dbReference type="InterPro" id="IPR011701">
    <property type="entry name" value="MFS"/>
</dbReference>
<dbReference type="InterPro" id="IPR020846">
    <property type="entry name" value="MFS_dom"/>
</dbReference>
<dbReference type="InterPro" id="IPR036259">
    <property type="entry name" value="MFS_trans_sf"/>
</dbReference>
<dbReference type="InterPro" id="IPR023721">
    <property type="entry name" value="Multi-R_MdtD"/>
</dbReference>
<dbReference type="NCBIfam" id="NF007799">
    <property type="entry name" value="PRK10504.1"/>
    <property type="match status" value="1"/>
</dbReference>
<dbReference type="PANTHER" id="PTHR42718:SF46">
    <property type="entry name" value="BLR6921 PROTEIN"/>
    <property type="match status" value="1"/>
</dbReference>
<dbReference type="PANTHER" id="PTHR42718">
    <property type="entry name" value="MAJOR FACILITATOR SUPERFAMILY MULTIDRUG TRANSPORTER MFSC"/>
    <property type="match status" value="1"/>
</dbReference>
<dbReference type="Pfam" id="PF07690">
    <property type="entry name" value="MFS_1"/>
    <property type="match status" value="1"/>
</dbReference>
<dbReference type="PRINTS" id="PR01036">
    <property type="entry name" value="TCRTETB"/>
</dbReference>
<dbReference type="SUPFAM" id="SSF103473">
    <property type="entry name" value="MFS general substrate transporter"/>
    <property type="match status" value="1"/>
</dbReference>
<dbReference type="PROSITE" id="PS50850">
    <property type="entry name" value="MFS"/>
    <property type="match status" value="1"/>
</dbReference>
<evidence type="ECO:0000255" key="1">
    <source>
        <dbReference type="HAMAP-Rule" id="MF_01577"/>
    </source>
</evidence>
<organism>
    <name type="scientific">Salmonella newport (strain SL254)</name>
    <dbReference type="NCBI Taxonomy" id="423368"/>
    <lineage>
        <taxon>Bacteria</taxon>
        <taxon>Pseudomonadati</taxon>
        <taxon>Pseudomonadota</taxon>
        <taxon>Gammaproteobacteria</taxon>
        <taxon>Enterobacterales</taxon>
        <taxon>Enterobacteriaceae</taxon>
        <taxon>Salmonella</taxon>
    </lineage>
</organism>
<gene>
    <name evidence="1" type="primary">mdtD</name>
    <name type="ordered locus">SNSL254_A2315</name>
</gene>
<keyword id="KW-0997">Cell inner membrane</keyword>
<keyword id="KW-1003">Cell membrane</keyword>
<keyword id="KW-0472">Membrane</keyword>
<keyword id="KW-0812">Transmembrane</keyword>
<keyword id="KW-1133">Transmembrane helix</keyword>
<keyword id="KW-0813">Transport</keyword>
<proteinExistence type="inferred from homology"/>